<reference key="1">
    <citation type="journal article" date="2007" name="Science">
        <title>The Fusarium graminearum genome reveals a link between localized polymorphism and pathogen specialization.</title>
        <authorList>
            <person name="Cuomo C.A."/>
            <person name="Gueldener U."/>
            <person name="Xu J.-R."/>
            <person name="Trail F."/>
            <person name="Turgeon B.G."/>
            <person name="Di Pietro A."/>
            <person name="Walton J.D."/>
            <person name="Ma L.-J."/>
            <person name="Baker S.E."/>
            <person name="Rep M."/>
            <person name="Adam G."/>
            <person name="Antoniw J."/>
            <person name="Baldwin T."/>
            <person name="Calvo S.E."/>
            <person name="Chang Y.-L."/>
            <person name="DeCaprio D."/>
            <person name="Gale L.R."/>
            <person name="Gnerre S."/>
            <person name="Goswami R.S."/>
            <person name="Hammond-Kosack K."/>
            <person name="Harris L.J."/>
            <person name="Hilburn K."/>
            <person name="Kennell J.C."/>
            <person name="Kroken S."/>
            <person name="Magnuson J.K."/>
            <person name="Mannhaupt G."/>
            <person name="Mauceli E.W."/>
            <person name="Mewes H.-W."/>
            <person name="Mitterbauer R."/>
            <person name="Muehlbauer G."/>
            <person name="Muensterkoetter M."/>
            <person name="Nelson D."/>
            <person name="O'Donnell K."/>
            <person name="Ouellet T."/>
            <person name="Qi W."/>
            <person name="Quesneville H."/>
            <person name="Roncero M.I.G."/>
            <person name="Seong K.-Y."/>
            <person name="Tetko I.V."/>
            <person name="Urban M."/>
            <person name="Waalwijk C."/>
            <person name="Ward T.J."/>
            <person name="Yao J."/>
            <person name="Birren B.W."/>
            <person name="Kistler H.C."/>
        </authorList>
    </citation>
    <scope>NUCLEOTIDE SEQUENCE [LARGE SCALE GENOMIC DNA]</scope>
    <source>
        <strain>ATCC MYA-4620 / CBS 123657 / FGSC 9075 / NRRL 31084 / PH-1</strain>
    </source>
</reference>
<reference key="2">
    <citation type="journal article" date="2010" name="Nature">
        <title>Comparative genomics reveals mobile pathogenicity chromosomes in Fusarium.</title>
        <authorList>
            <person name="Ma L.-J."/>
            <person name="van der Does H.C."/>
            <person name="Borkovich K.A."/>
            <person name="Coleman J.J."/>
            <person name="Daboussi M.-J."/>
            <person name="Di Pietro A."/>
            <person name="Dufresne M."/>
            <person name="Freitag M."/>
            <person name="Grabherr M."/>
            <person name="Henrissat B."/>
            <person name="Houterman P.M."/>
            <person name="Kang S."/>
            <person name="Shim W.-B."/>
            <person name="Woloshuk C."/>
            <person name="Xie X."/>
            <person name="Xu J.-R."/>
            <person name="Antoniw J."/>
            <person name="Baker S.E."/>
            <person name="Bluhm B.H."/>
            <person name="Breakspear A."/>
            <person name="Brown D.W."/>
            <person name="Butchko R.A.E."/>
            <person name="Chapman S."/>
            <person name="Coulson R."/>
            <person name="Coutinho P.M."/>
            <person name="Danchin E.G.J."/>
            <person name="Diener A."/>
            <person name="Gale L.R."/>
            <person name="Gardiner D.M."/>
            <person name="Goff S."/>
            <person name="Hammond-Kosack K.E."/>
            <person name="Hilburn K."/>
            <person name="Hua-Van A."/>
            <person name="Jonkers W."/>
            <person name="Kazan K."/>
            <person name="Kodira C.D."/>
            <person name="Koehrsen M."/>
            <person name="Kumar L."/>
            <person name="Lee Y.-H."/>
            <person name="Li L."/>
            <person name="Manners J.M."/>
            <person name="Miranda-Saavedra D."/>
            <person name="Mukherjee M."/>
            <person name="Park G."/>
            <person name="Park J."/>
            <person name="Park S.-Y."/>
            <person name="Proctor R.H."/>
            <person name="Regev A."/>
            <person name="Ruiz-Roldan M.C."/>
            <person name="Sain D."/>
            <person name="Sakthikumar S."/>
            <person name="Sykes S."/>
            <person name="Schwartz D.C."/>
            <person name="Turgeon B.G."/>
            <person name="Wapinski I."/>
            <person name="Yoder O."/>
            <person name="Young S."/>
            <person name="Zeng Q."/>
            <person name="Zhou S."/>
            <person name="Galagan J."/>
            <person name="Cuomo C.A."/>
            <person name="Kistler H.C."/>
            <person name="Rep M."/>
        </authorList>
    </citation>
    <scope>GENOME REANNOTATION</scope>
    <source>
        <strain>ATCC MYA-4620 / CBS 123657 / FGSC 9075 / NRRL 31084 / PH-1</strain>
    </source>
</reference>
<reference key="3">
    <citation type="journal article" date="2015" name="BMC Genomics">
        <title>The completed genome sequence of the pathogenic ascomycete fungus Fusarium graminearum.</title>
        <authorList>
            <person name="King R."/>
            <person name="Urban M."/>
            <person name="Hammond-Kosack M.C.U."/>
            <person name="Hassani-Pak K."/>
            <person name="Hammond-Kosack K.E."/>
        </authorList>
    </citation>
    <scope>NUCLEOTIDE SEQUENCE [LARGE SCALE GENOMIC DNA]</scope>
    <source>
        <strain>ATCC MYA-4620 / CBS 123657 / FGSC 9075 / NRRL 31084 / PH-1</strain>
    </source>
</reference>
<feature type="chain" id="PRO_0000123499" description="Pre-mRNA-splicing factor CWC21">
    <location>
        <begin position="1"/>
        <end position="175"/>
    </location>
</feature>
<feature type="domain" description="CWF21" evidence="2">
    <location>
        <begin position="54"/>
        <end position="97"/>
    </location>
</feature>
<feature type="region of interest" description="Disordered" evidence="3">
    <location>
        <begin position="25"/>
        <end position="55"/>
    </location>
</feature>
<feature type="region of interest" description="Disordered" evidence="3">
    <location>
        <begin position="98"/>
        <end position="126"/>
    </location>
</feature>
<feature type="region of interest" description="Disordered" evidence="3">
    <location>
        <begin position="144"/>
        <end position="175"/>
    </location>
</feature>
<feature type="coiled-coil region" evidence="2">
    <location>
        <begin position="57"/>
        <end position="94"/>
    </location>
</feature>
<feature type="compositionally biased region" description="Basic and acidic residues" evidence="3">
    <location>
        <begin position="37"/>
        <end position="55"/>
    </location>
</feature>
<feature type="compositionally biased region" description="Basic residues" evidence="3">
    <location>
        <begin position="105"/>
        <end position="114"/>
    </location>
</feature>
<feature type="compositionally biased region" description="Basic and acidic residues" evidence="3">
    <location>
        <begin position="115"/>
        <end position="126"/>
    </location>
</feature>
<feature type="compositionally biased region" description="Basic and acidic residues" evidence="3">
    <location>
        <begin position="144"/>
        <end position="159"/>
    </location>
</feature>
<feature type="compositionally biased region" description="Basic and acidic residues" evidence="3">
    <location>
        <begin position="166"/>
        <end position="175"/>
    </location>
</feature>
<proteinExistence type="inferred from homology"/>
<sequence>MSDNVGLNTPRGSGTSGYVQRNLAHIKPRDYGAPYPKDLDSLRHKQRQPDKGILEHDRKREVEVKVFDLRDKLEEEEVDEDEIDKRCDELRQKLLAEMNLGRRGGGPKKSFKQHQVHEMADAKIKESERLRKALKISADYEEGGHWKRQEERLRSALEKEDNDEEERGKVSPPRD</sequence>
<protein>
    <recommendedName>
        <fullName>Pre-mRNA-splicing factor CWC21</fullName>
    </recommendedName>
</protein>
<gene>
    <name type="primary">CWC21</name>
    <name type="ORF">FGRRES_16494</name>
    <name type="ORF">FGSG_05538</name>
</gene>
<dbReference type="EMBL" id="DS231665">
    <property type="protein sequence ID" value="ESU11510.1"/>
    <property type="status" value="ALT_SEQ"/>
    <property type="molecule type" value="Genomic_DNA"/>
</dbReference>
<dbReference type="EMBL" id="HG970334">
    <property type="protein sequence ID" value="CEF87130.1"/>
    <property type="molecule type" value="Genomic_DNA"/>
</dbReference>
<dbReference type="RefSeq" id="XP_011324086.1">
    <property type="nucleotide sequence ID" value="XM_011325784.1"/>
</dbReference>
<dbReference type="SMR" id="Q4IB70"/>
<dbReference type="FunCoup" id="Q4IB70">
    <property type="interactions" value="51"/>
</dbReference>
<dbReference type="STRING" id="229533.Q4IB70"/>
<dbReference type="GeneID" id="23552717"/>
<dbReference type="KEGG" id="fgr:FGSG_05538"/>
<dbReference type="VEuPathDB" id="FungiDB:FGRAMPH1_01G18157"/>
<dbReference type="eggNOG" id="KOG1869">
    <property type="taxonomic scope" value="Eukaryota"/>
</dbReference>
<dbReference type="HOGENOM" id="CLU_067891_2_1_1"/>
<dbReference type="InParanoid" id="Q4IB70"/>
<dbReference type="OrthoDB" id="106559at110618"/>
<dbReference type="Proteomes" id="UP000070720">
    <property type="component" value="Chromosome 3"/>
</dbReference>
<dbReference type="GO" id="GO:0005737">
    <property type="term" value="C:cytoplasm"/>
    <property type="evidence" value="ECO:0007669"/>
    <property type="project" value="UniProtKB-SubCell"/>
</dbReference>
<dbReference type="GO" id="GO:0005681">
    <property type="term" value="C:spliceosomal complex"/>
    <property type="evidence" value="ECO:0007669"/>
    <property type="project" value="UniProtKB-KW"/>
</dbReference>
<dbReference type="GO" id="GO:0006397">
    <property type="term" value="P:mRNA processing"/>
    <property type="evidence" value="ECO:0007669"/>
    <property type="project" value="UniProtKB-KW"/>
</dbReference>
<dbReference type="GO" id="GO:0008380">
    <property type="term" value="P:RNA splicing"/>
    <property type="evidence" value="ECO:0007669"/>
    <property type="project" value="UniProtKB-KW"/>
</dbReference>
<dbReference type="CDD" id="cd21372">
    <property type="entry name" value="cwf21_CWC21-like"/>
    <property type="match status" value="1"/>
</dbReference>
<dbReference type="Gene3D" id="6.10.140.420">
    <property type="match status" value="1"/>
</dbReference>
<dbReference type="InterPro" id="IPR051372">
    <property type="entry name" value="CWC21"/>
</dbReference>
<dbReference type="InterPro" id="IPR013170">
    <property type="entry name" value="mRNA_splic_Cwf21_dom"/>
</dbReference>
<dbReference type="PANTHER" id="PTHR36562">
    <property type="entry name" value="SERINE/ARGININE REPETITIVE MATRIX 2"/>
    <property type="match status" value="1"/>
</dbReference>
<dbReference type="PANTHER" id="PTHR36562:SF5">
    <property type="entry name" value="SERINE_ARGININE REPETITIVE MATRIX 2"/>
    <property type="match status" value="1"/>
</dbReference>
<dbReference type="Pfam" id="PF08312">
    <property type="entry name" value="cwf21"/>
    <property type="match status" value="1"/>
</dbReference>
<dbReference type="SMART" id="SM01115">
    <property type="entry name" value="cwf21"/>
    <property type="match status" value="1"/>
</dbReference>
<keyword id="KW-0175">Coiled coil</keyword>
<keyword id="KW-0963">Cytoplasm</keyword>
<keyword id="KW-0507">mRNA processing</keyword>
<keyword id="KW-0508">mRNA splicing</keyword>
<keyword id="KW-0539">Nucleus</keyword>
<keyword id="KW-1185">Reference proteome</keyword>
<keyword id="KW-0747">Spliceosome</keyword>
<name>CWC21_GIBZE</name>
<comment type="function">
    <text evidence="1">Involved in pre-mRNA splicing. May function at or prior to the first catalytic step of splicing at the catalytic center of the spliceosome. May do so by stabilizing the catalytic center or the position of the RNA substrate (By similarity).</text>
</comment>
<comment type="subunit">
    <text evidence="1">Associates with the NTC complex (or PRP19-associated complex). The NTC complex associates with the spliceosome after the release of the U1 and U4 snRNAs and forms the CWC spliceosome subcomplex reminiscent of a late-stage spliceosome.</text>
</comment>
<comment type="subcellular location">
    <subcellularLocation>
        <location evidence="1">Cytoplasm</location>
    </subcellularLocation>
    <subcellularLocation>
        <location evidence="1">Nucleus</location>
    </subcellularLocation>
</comment>
<comment type="similarity">
    <text evidence="4">Belongs to the CWC21 family.</text>
</comment>
<comment type="sequence caution" evidence="4">
    <conflict type="erroneous gene model prediction">
        <sequence resource="EMBL-CDS" id="ESU11510"/>
    </conflict>
</comment>
<evidence type="ECO:0000250" key="1"/>
<evidence type="ECO:0000255" key="2"/>
<evidence type="ECO:0000256" key="3">
    <source>
        <dbReference type="SAM" id="MobiDB-lite"/>
    </source>
</evidence>
<evidence type="ECO:0000305" key="4"/>
<organism>
    <name type="scientific">Gibberella zeae (strain ATCC MYA-4620 / CBS 123657 / FGSC 9075 / NRRL 31084 / PH-1)</name>
    <name type="common">Wheat head blight fungus</name>
    <name type="synonym">Fusarium graminearum</name>
    <dbReference type="NCBI Taxonomy" id="229533"/>
    <lineage>
        <taxon>Eukaryota</taxon>
        <taxon>Fungi</taxon>
        <taxon>Dikarya</taxon>
        <taxon>Ascomycota</taxon>
        <taxon>Pezizomycotina</taxon>
        <taxon>Sordariomycetes</taxon>
        <taxon>Hypocreomycetidae</taxon>
        <taxon>Hypocreales</taxon>
        <taxon>Nectriaceae</taxon>
        <taxon>Fusarium</taxon>
    </lineage>
</organism>
<accession>Q4IB70</accession>
<accession>A0A0E0SL17</accession>
<accession>V6RHV9</accession>